<comment type="function">
    <text evidence="1">Carrier of the growing fatty acid chain in fatty acid biosynthesis.</text>
</comment>
<comment type="pathway">
    <text>Lipid metabolism; fatty acid biosynthesis.</text>
</comment>
<comment type="PTM">
    <text evidence="3">4'-phosphopantetheine is transferred from CoA to a specific serine of the apo-ACP-like protein.</text>
</comment>
<proteinExistence type="inferred from homology"/>
<dbReference type="EMBL" id="AL445564">
    <property type="protein sequence ID" value="CAC13531.1"/>
    <property type="molecule type" value="Genomic_DNA"/>
</dbReference>
<dbReference type="PIR" id="F90556">
    <property type="entry name" value="F90556"/>
</dbReference>
<dbReference type="RefSeq" id="WP_010925162.1">
    <property type="nucleotide sequence ID" value="NC_002771.1"/>
</dbReference>
<dbReference type="SMR" id="Q98QK3"/>
<dbReference type="STRING" id="272635.gene:17576957"/>
<dbReference type="KEGG" id="mpu:MYPU_3580"/>
<dbReference type="HOGENOM" id="CLU_108696_5_3_14"/>
<dbReference type="BioCyc" id="MPUL272635:G1GT6-365-MONOMER"/>
<dbReference type="UniPathway" id="UPA00094"/>
<dbReference type="Proteomes" id="UP000000528">
    <property type="component" value="Chromosome"/>
</dbReference>
<dbReference type="GO" id="GO:0005829">
    <property type="term" value="C:cytosol"/>
    <property type="evidence" value="ECO:0007669"/>
    <property type="project" value="TreeGrafter"/>
</dbReference>
<dbReference type="GO" id="GO:0016020">
    <property type="term" value="C:membrane"/>
    <property type="evidence" value="ECO:0007669"/>
    <property type="project" value="GOC"/>
</dbReference>
<dbReference type="GO" id="GO:0000035">
    <property type="term" value="F:acyl binding"/>
    <property type="evidence" value="ECO:0007669"/>
    <property type="project" value="TreeGrafter"/>
</dbReference>
<dbReference type="GO" id="GO:0000036">
    <property type="term" value="F:acyl carrier activity"/>
    <property type="evidence" value="ECO:0007669"/>
    <property type="project" value="TreeGrafter"/>
</dbReference>
<dbReference type="GO" id="GO:0009245">
    <property type="term" value="P:lipid A biosynthetic process"/>
    <property type="evidence" value="ECO:0007669"/>
    <property type="project" value="TreeGrafter"/>
</dbReference>
<dbReference type="Gene3D" id="1.10.1200.10">
    <property type="entry name" value="ACP-like"/>
    <property type="match status" value="1"/>
</dbReference>
<dbReference type="InterPro" id="IPR003231">
    <property type="entry name" value="ACP"/>
</dbReference>
<dbReference type="InterPro" id="IPR036736">
    <property type="entry name" value="ACP-like_sf"/>
</dbReference>
<dbReference type="InterPro" id="IPR009081">
    <property type="entry name" value="PP-bd_ACP"/>
</dbReference>
<dbReference type="PANTHER" id="PTHR20863">
    <property type="entry name" value="ACYL CARRIER PROTEIN"/>
    <property type="match status" value="1"/>
</dbReference>
<dbReference type="PANTHER" id="PTHR20863:SF76">
    <property type="entry name" value="CARRIER DOMAIN-CONTAINING PROTEIN"/>
    <property type="match status" value="1"/>
</dbReference>
<dbReference type="Pfam" id="PF00550">
    <property type="entry name" value="PP-binding"/>
    <property type="match status" value="1"/>
</dbReference>
<dbReference type="SUPFAM" id="SSF47336">
    <property type="entry name" value="ACP-like"/>
    <property type="match status" value="1"/>
</dbReference>
<dbReference type="PROSITE" id="PS50075">
    <property type="entry name" value="CARRIER"/>
    <property type="match status" value="1"/>
</dbReference>
<feature type="chain" id="PRO_0000180267" description="Acyl carrier protein homolog">
    <location>
        <begin position="1"/>
        <end position="73"/>
    </location>
</feature>
<feature type="domain" description="Carrier" evidence="2">
    <location>
        <begin position="1"/>
        <end position="72"/>
    </location>
</feature>
<feature type="modified residue" description="O-(pantetheine 4'-phosphoryl)serine" evidence="2">
    <location>
        <position position="32"/>
    </location>
</feature>
<name>ACPH_MYCPU</name>
<organism>
    <name type="scientific">Mycoplasmopsis pulmonis (strain UAB CTIP)</name>
    <name type="common">Mycoplasma pulmonis</name>
    <dbReference type="NCBI Taxonomy" id="272635"/>
    <lineage>
        <taxon>Bacteria</taxon>
        <taxon>Bacillati</taxon>
        <taxon>Mycoplasmatota</taxon>
        <taxon>Mycoplasmoidales</taxon>
        <taxon>Metamycoplasmataceae</taxon>
        <taxon>Mycoplasmopsis</taxon>
    </lineage>
</organism>
<evidence type="ECO:0000250" key="1"/>
<evidence type="ECO:0000255" key="2">
    <source>
        <dbReference type="PROSITE-ProRule" id="PRU00258"/>
    </source>
</evidence>
<evidence type="ECO:0000305" key="3"/>
<gene>
    <name type="ordered locus">MYPU_3580</name>
</gene>
<keyword id="KW-0275">Fatty acid biosynthesis</keyword>
<keyword id="KW-0276">Fatty acid metabolism</keyword>
<keyword id="KW-0444">Lipid biosynthesis</keyword>
<keyword id="KW-0443">Lipid metabolism</keyword>
<keyword id="KW-0596">Phosphopantetheine</keyword>
<keyword id="KW-0597">Phosphoprotein</keyword>
<keyword id="KW-1185">Reference proteome</keyword>
<protein>
    <recommendedName>
        <fullName>Acyl carrier protein homolog</fullName>
        <shortName>ACP</shortName>
    </recommendedName>
</protein>
<reference key="1">
    <citation type="journal article" date="2001" name="Nucleic Acids Res.">
        <title>The complete genome sequence of the murine respiratory pathogen Mycoplasma pulmonis.</title>
        <authorList>
            <person name="Chambaud I."/>
            <person name="Heilig R."/>
            <person name="Ferris S."/>
            <person name="Barbe V."/>
            <person name="Samson D."/>
            <person name="Galisson F."/>
            <person name="Moszer I."/>
            <person name="Dybvig K."/>
            <person name="Wroblewski H."/>
            <person name="Viari A."/>
            <person name="Rocha E.P.C."/>
            <person name="Blanchard A."/>
        </authorList>
    </citation>
    <scope>NUCLEOTIDE SEQUENCE [LARGE SCALE GENOMIC DNA]</scope>
    <source>
        <strain>UAB CTIP</strain>
    </source>
</reference>
<accession>Q98QK3</accession>
<sequence length="73" mass="8452">MAIKEWIITQLSKLTKNKITEESLFSEIGIDSLDLVEHVSDLEQHFDIEISDEELLNIKKVNDIIVLIEQKSK</sequence>